<comment type="function">
    <text evidence="2">Subunit of the oligosaccharyl transferase (OST) complex that catalyzes the initial transfer of a defined glycan (Glc(3)Man(9)GlcNAc(2) in eukaryotes) from the lipid carrier dolichol-pyrophosphate to an asparagine residue within an Asn-X-Ser/Thr consensus motif in nascent polypeptide chains, the first step in protein N-glycosylation. N-glycosylation occurs cotranslationally and the complex associates with the Sec61 complex at the channel-forming translocon complex that mediates protein translocation across the endoplasmic reticulum (ER). All subunits are required for a maximal enzyme activity.</text>
</comment>
<comment type="pathway">
    <text>Protein modification; protein glycosylation.</text>
</comment>
<comment type="subunit">
    <text evidence="2">Component of the oligosaccharyltransferase (OST) complex.</text>
</comment>
<comment type="subcellular location">
    <subcellularLocation>
        <location evidence="1">Endoplasmic reticulum membrane</location>
        <topology evidence="1">Single-pass type III membrane protein</topology>
    </subcellularLocation>
</comment>
<comment type="similarity">
    <text evidence="5">Belongs to the OST4 family.</text>
</comment>
<feature type="chain" id="PRO_0000058096" description="Dolichyl-diphosphooligosaccharide--protein glycosyltransferase 4 kDa subunit">
    <location>
        <begin position="1"/>
        <end position="60"/>
    </location>
</feature>
<feature type="topological domain" description="Lumenal" evidence="3">
    <location>
        <begin position="1"/>
        <end position="6"/>
    </location>
</feature>
<feature type="transmembrane region" description="Helical" evidence="3">
    <location>
        <begin position="7"/>
        <end position="29"/>
    </location>
</feature>
<feature type="topological domain" description="Cytoplasmic" evidence="3">
    <location>
        <begin position="30"/>
        <end position="60"/>
    </location>
</feature>
<feature type="region of interest" description="Disordered" evidence="4">
    <location>
        <begin position="37"/>
        <end position="60"/>
    </location>
</feature>
<feature type="compositionally biased region" description="Low complexity" evidence="4">
    <location>
        <begin position="41"/>
        <end position="60"/>
    </location>
</feature>
<keyword id="KW-0256">Endoplasmic reticulum</keyword>
<keyword id="KW-0472">Membrane</keyword>
<keyword id="KW-0735">Signal-anchor</keyword>
<keyword id="KW-0812">Transmembrane</keyword>
<keyword id="KW-1133">Transmembrane helix</keyword>
<proteinExistence type="inferred from homology"/>
<organism>
    <name type="scientific">Candida albicans</name>
    <name type="common">Yeast</name>
    <dbReference type="NCBI Taxonomy" id="5476"/>
    <lineage>
        <taxon>Eukaryota</taxon>
        <taxon>Fungi</taxon>
        <taxon>Dikarya</taxon>
        <taxon>Ascomycota</taxon>
        <taxon>Saccharomycotina</taxon>
        <taxon>Pichiomycetes</taxon>
        <taxon>Debaryomycetaceae</taxon>
        <taxon>Candida/Lodderomyces clade</taxon>
        <taxon>Candida</taxon>
    </lineage>
</organism>
<gene>
    <name type="primary">OST4</name>
</gene>
<name>OST4_CANAX</name>
<protein>
    <recommendedName>
        <fullName>Dolichyl-diphosphooligosaccharide--protein glycosyltransferase 4 kDa subunit</fullName>
        <shortName>OTase 4 kDa subunit</shortName>
        <shortName>Oligosaccharyl transferase 4 kDa subunit</shortName>
    </recommendedName>
</protein>
<dbReference type="EMBL" id="AJ390501">
    <property type="protein sequence ID" value="CAB77641.1"/>
    <property type="molecule type" value="mRNA"/>
</dbReference>
<dbReference type="SMR" id="Q9P838"/>
<dbReference type="CGD" id="CAL0000177487">
    <property type="gene designation" value="orf19.1360.1"/>
</dbReference>
<dbReference type="VEuPathDB" id="FungiDB:CAWG_06063"/>
<dbReference type="PhylomeDB" id="Q9P838"/>
<dbReference type="UniPathway" id="UPA00378"/>
<dbReference type="GO" id="GO:0005789">
    <property type="term" value="C:endoplasmic reticulum membrane"/>
    <property type="evidence" value="ECO:0007669"/>
    <property type="project" value="UniProtKB-SubCell"/>
</dbReference>
<dbReference type="GO" id="GO:0006486">
    <property type="term" value="P:protein glycosylation"/>
    <property type="evidence" value="ECO:0007669"/>
    <property type="project" value="UniProtKB-UniPathway"/>
</dbReference>
<dbReference type="InterPro" id="IPR018943">
    <property type="entry name" value="Oligosaccaryltransferase"/>
</dbReference>
<dbReference type="InterPro" id="IPR036330">
    <property type="entry name" value="Ost4p_sf"/>
</dbReference>
<dbReference type="Pfam" id="PF10215">
    <property type="entry name" value="Ost4"/>
    <property type="match status" value="1"/>
</dbReference>
<dbReference type="SUPFAM" id="SSF103464">
    <property type="entry name" value="Oligosaccharyltransferase subunit ost4p"/>
    <property type="match status" value="1"/>
</dbReference>
<evidence type="ECO:0000250" key="1"/>
<evidence type="ECO:0000250" key="2">
    <source>
        <dbReference type="UniProtKB" id="Q99380"/>
    </source>
</evidence>
<evidence type="ECO:0000255" key="3"/>
<evidence type="ECO:0000256" key="4">
    <source>
        <dbReference type="SAM" id="MobiDB-lite"/>
    </source>
</evidence>
<evidence type="ECO:0000305" key="5"/>
<sequence length="60" mass="6672">MITDEQLNTIALTFGFASIILIIIYHAISTNVHKLEDETPSSSFTRTNTTETTVASKKKK</sequence>
<reference key="1">
    <citation type="submission" date="1999-12" db="EMBL/GenBank/DDBJ databases">
        <title>A novel method for systematic identification of genes required for growth of Candida albicans.</title>
        <authorList>
            <person name="De Backer M.D."/>
            <person name="Logghe M."/>
            <person name="Viaene J."/>
            <person name="Loonen I."/>
            <person name="Vandoninck S."/>
            <person name="de Hoogt R."/>
            <person name="Nelissen B."/>
            <person name="Dewaele S."/>
            <person name="Simons F."/>
            <person name="Verhasselt P."/>
            <person name="Contreras R."/>
            <person name="Luyten W.H.M.L."/>
        </authorList>
    </citation>
    <scope>NUCLEOTIDE SEQUENCE [MRNA]</scope>
</reference>
<accession>Q9P838</accession>